<proteinExistence type="inferred from homology"/>
<dbReference type="EMBL" id="AY780259">
    <property type="protein sequence ID" value="AAX21039.1"/>
    <property type="molecule type" value="Genomic_DNA"/>
</dbReference>
<dbReference type="RefSeq" id="YP_636309.1">
    <property type="nucleotide sequence ID" value="NC_008115.1"/>
</dbReference>
<dbReference type="SMR" id="Q49KY8"/>
<dbReference type="GeneID" id="4108462"/>
<dbReference type="GO" id="GO:0009535">
    <property type="term" value="C:chloroplast thylakoid membrane"/>
    <property type="evidence" value="ECO:0007669"/>
    <property type="project" value="UniProtKB-SubCell"/>
</dbReference>
<dbReference type="GO" id="GO:0009522">
    <property type="term" value="C:photosystem I"/>
    <property type="evidence" value="ECO:0007669"/>
    <property type="project" value="UniProtKB-KW"/>
</dbReference>
<dbReference type="GO" id="GO:0015979">
    <property type="term" value="P:photosynthesis"/>
    <property type="evidence" value="ECO:0007669"/>
    <property type="project" value="UniProtKB-UniRule"/>
</dbReference>
<dbReference type="HAMAP" id="MF_00431">
    <property type="entry name" value="PSI_PsaI"/>
    <property type="match status" value="1"/>
</dbReference>
<dbReference type="InterPro" id="IPR001302">
    <property type="entry name" value="PSI_PsaI"/>
</dbReference>
<dbReference type="InterPro" id="IPR036357">
    <property type="entry name" value="PSI_PsaI_sf"/>
</dbReference>
<dbReference type="NCBIfam" id="TIGR03052">
    <property type="entry name" value="PS_I_psaI"/>
    <property type="match status" value="1"/>
</dbReference>
<dbReference type="PANTHER" id="PTHR35775">
    <property type="match status" value="1"/>
</dbReference>
<dbReference type="PANTHER" id="PTHR35775:SF2">
    <property type="entry name" value="PHOTOSYSTEM I REACTION CENTER SUBUNIT VIII"/>
    <property type="match status" value="1"/>
</dbReference>
<dbReference type="Pfam" id="PF00796">
    <property type="entry name" value="PSI_8"/>
    <property type="match status" value="1"/>
</dbReference>
<dbReference type="SUPFAM" id="SSF81540">
    <property type="entry name" value="Subunit VIII of photosystem I reaction centre, PsaI"/>
    <property type="match status" value="1"/>
</dbReference>
<geneLocation type="chloroplast"/>
<protein>
    <recommendedName>
        <fullName evidence="1">Photosystem I reaction center subunit VIII</fullName>
        <shortName evidence="1">PSI-I</shortName>
    </recommendedName>
</protein>
<evidence type="ECO:0000255" key="1">
    <source>
        <dbReference type="HAMAP-Rule" id="MF_00431"/>
    </source>
</evidence>
<feature type="chain" id="PRO_0000276020" description="Photosystem I reaction center subunit VIII">
    <location>
        <begin position="1"/>
        <end position="37"/>
    </location>
</feature>
<feature type="transmembrane region" description="Helical" evidence="1">
    <location>
        <begin position="7"/>
        <end position="27"/>
    </location>
</feature>
<comment type="function">
    <text evidence="1">May help in the organization of the PsaL subunit.</text>
</comment>
<comment type="subcellular location">
    <subcellularLocation>
        <location evidence="1">Plastid</location>
        <location evidence="1">Chloroplast thylakoid membrane</location>
        <topology evidence="1">Single-pass membrane protein</topology>
    </subcellularLocation>
</comment>
<comment type="similarity">
    <text evidence="1">Belongs to the PsaI family.</text>
</comment>
<organism>
    <name type="scientific">Eucalyptus globulus subsp. globulus</name>
    <name type="common">Tasmanian blue gum</name>
    <dbReference type="NCBI Taxonomy" id="71271"/>
    <lineage>
        <taxon>Eukaryota</taxon>
        <taxon>Viridiplantae</taxon>
        <taxon>Streptophyta</taxon>
        <taxon>Embryophyta</taxon>
        <taxon>Tracheophyta</taxon>
        <taxon>Spermatophyta</taxon>
        <taxon>Magnoliopsida</taxon>
        <taxon>eudicotyledons</taxon>
        <taxon>Gunneridae</taxon>
        <taxon>Pentapetalae</taxon>
        <taxon>rosids</taxon>
        <taxon>malvids</taxon>
        <taxon>Myrtales</taxon>
        <taxon>Myrtaceae</taxon>
        <taxon>Myrtoideae</taxon>
        <taxon>Eucalypteae</taxon>
        <taxon>Eucalyptus</taxon>
    </lineage>
</organism>
<name>PSAI_EUCGG</name>
<keyword id="KW-0150">Chloroplast</keyword>
<keyword id="KW-0472">Membrane</keyword>
<keyword id="KW-0602">Photosynthesis</keyword>
<keyword id="KW-0603">Photosystem I</keyword>
<keyword id="KW-0934">Plastid</keyword>
<keyword id="KW-0793">Thylakoid</keyword>
<keyword id="KW-0812">Transmembrane</keyword>
<keyword id="KW-1133">Transmembrane helix</keyword>
<sequence length="37" mass="4118">MIIFNNLPSFFVPLVGLVFPAIAMASLSLHVQKNKIF</sequence>
<reference key="1">
    <citation type="journal article" date="2005" name="DNA Res.">
        <title>Complete nucleotide sequence of the chloroplast genome from the Tasmanian blue gum, Eucalyptus globulus (Myrtaceae).</title>
        <authorList>
            <person name="Steane D.A."/>
        </authorList>
    </citation>
    <scope>NUCLEOTIDE SEQUENCE [LARGE SCALE GENOMIC DNA]</scope>
</reference>
<accession>Q49KY8</accession>
<gene>
    <name evidence="1" type="primary">psaI</name>
</gene>